<sequence length="220" mass="24850">MAKQEYKQLPKRSEVHSATEQFKDTIKTSLGLDLFKGLGLTIKEFFSPSVTIHYPMEQLPLSPRYRAVHHLQRLLDSGSERCIGCGLCEKICTSNCIRIITHKGEDNRKKIDSYTINLGRCIYCGLCAEVCPELAIVMGNRFENASTQRSQYGSKSEFLTNEQDAKNCSHAEFLGFGAVSPNYNERMQATPLDYVQEPSKEESKEETPTRSESHKGDENV</sequence>
<keyword id="KW-0004">4Fe-4S</keyword>
<keyword id="KW-0997">Cell inner membrane</keyword>
<keyword id="KW-1003">Cell membrane</keyword>
<keyword id="KW-0408">Iron</keyword>
<keyword id="KW-0411">Iron-sulfur</keyword>
<keyword id="KW-0472">Membrane</keyword>
<keyword id="KW-0479">Metal-binding</keyword>
<keyword id="KW-0520">NAD</keyword>
<keyword id="KW-0874">Quinone</keyword>
<keyword id="KW-1185">Reference proteome</keyword>
<keyword id="KW-0677">Repeat</keyword>
<keyword id="KW-1278">Translocase</keyword>
<keyword id="KW-0830">Ubiquinone</keyword>
<organism>
    <name type="scientific">Helicobacter pylori (strain G27)</name>
    <dbReference type="NCBI Taxonomy" id="563041"/>
    <lineage>
        <taxon>Bacteria</taxon>
        <taxon>Pseudomonadati</taxon>
        <taxon>Campylobacterota</taxon>
        <taxon>Epsilonproteobacteria</taxon>
        <taxon>Campylobacterales</taxon>
        <taxon>Helicobacteraceae</taxon>
        <taxon>Helicobacter</taxon>
    </lineage>
</organism>
<proteinExistence type="inferred from homology"/>
<comment type="function">
    <text evidence="1">NDH-1 shuttles electrons from NADH, via FMN and iron-sulfur (Fe-S) centers, to quinones in the respiratory chain. The immediate electron acceptor for the enzyme in this species is believed to be ubiquinone. Couples the redox reaction to proton translocation (for every two electrons transferred, four hydrogen ions are translocated across the cytoplasmic membrane), and thus conserves the redox energy in a proton gradient.</text>
</comment>
<comment type="catalytic activity">
    <reaction evidence="1">
        <text>a quinone + NADH + 5 H(+)(in) = a quinol + NAD(+) + 4 H(+)(out)</text>
        <dbReference type="Rhea" id="RHEA:57888"/>
        <dbReference type="ChEBI" id="CHEBI:15378"/>
        <dbReference type="ChEBI" id="CHEBI:24646"/>
        <dbReference type="ChEBI" id="CHEBI:57540"/>
        <dbReference type="ChEBI" id="CHEBI:57945"/>
        <dbReference type="ChEBI" id="CHEBI:132124"/>
    </reaction>
</comment>
<comment type="cofactor">
    <cofactor evidence="1">
        <name>[4Fe-4S] cluster</name>
        <dbReference type="ChEBI" id="CHEBI:49883"/>
    </cofactor>
    <text evidence="1">Binds 2 [4Fe-4S] clusters per subunit.</text>
</comment>
<comment type="subunit">
    <text evidence="1">NDH-1 is composed of 14 different subunits. Subunits NuoA, H, J, K, L, M, N constitute the membrane sector of the complex.</text>
</comment>
<comment type="subcellular location">
    <subcellularLocation>
        <location evidence="1">Cell inner membrane</location>
        <topology evidence="1">Peripheral membrane protein</topology>
    </subcellularLocation>
</comment>
<comment type="similarity">
    <text evidence="1">Belongs to the complex I 23 kDa subunit family.</text>
</comment>
<dbReference type="EC" id="7.1.1.-" evidence="1"/>
<dbReference type="EMBL" id="CP001173">
    <property type="protein sequence ID" value="ACI27962.1"/>
    <property type="molecule type" value="Genomic_DNA"/>
</dbReference>
<dbReference type="RefSeq" id="WP_001118571.1">
    <property type="nucleotide sequence ID" value="NC_011333.1"/>
</dbReference>
<dbReference type="SMR" id="B5Z8R3"/>
<dbReference type="KEGG" id="hpg:HPG27_1213"/>
<dbReference type="HOGENOM" id="CLU_067218_4_1_7"/>
<dbReference type="Proteomes" id="UP000001735">
    <property type="component" value="Chromosome"/>
</dbReference>
<dbReference type="GO" id="GO:0005886">
    <property type="term" value="C:plasma membrane"/>
    <property type="evidence" value="ECO:0007669"/>
    <property type="project" value="UniProtKB-SubCell"/>
</dbReference>
<dbReference type="GO" id="GO:0051539">
    <property type="term" value="F:4 iron, 4 sulfur cluster binding"/>
    <property type="evidence" value="ECO:0007669"/>
    <property type="project" value="UniProtKB-KW"/>
</dbReference>
<dbReference type="GO" id="GO:0005506">
    <property type="term" value="F:iron ion binding"/>
    <property type="evidence" value="ECO:0007669"/>
    <property type="project" value="UniProtKB-UniRule"/>
</dbReference>
<dbReference type="GO" id="GO:0050136">
    <property type="term" value="F:NADH:ubiquinone reductase (non-electrogenic) activity"/>
    <property type="evidence" value="ECO:0007669"/>
    <property type="project" value="UniProtKB-UniRule"/>
</dbReference>
<dbReference type="GO" id="GO:0048038">
    <property type="term" value="F:quinone binding"/>
    <property type="evidence" value="ECO:0007669"/>
    <property type="project" value="UniProtKB-KW"/>
</dbReference>
<dbReference type="GO" id="GO:0009060">
    <property type="term" value="P:aerobic respiration"/>
    <property type="evidence" value="ECO:0007669"/>
    <property type="project" value="TreeGrafter"/>
</dbReference>
<dbReference type="FunFam" id="3.30.70.3270:FF:000011">
    <property type="entry name" value="NADH-quinone oxidoreductase subunit I"/>
    <property type="match status" value="1"/>
</dbReference>
<dbReference type="Gene3D" id="3.30.70.3270">
    <property type="match status" value="1"/>
</dbReference>
<dbReference type="HAMAP" id="MF_01351">
    <property type="entry name" value="NDH1_NuoI"/>
    <property type="match status" value="1"/>
</dbReference>
<dbReference type="InterPro" id="IPR017896">
    <property type="entry name" value="4Fe4S_Fe-S-bd"/>
</dbReference>
<dbReference type="InterPro" id="IPR017900">
    <property type="entry name" value="4Fe4S_Fe_S_CS"/>
</dbReference>
<dbReference type="InterPro" id="IPR010226">
    <property type="entry name" value="NADH_quinone_OxRdtase_chainI"/>
</dbReference>
<dbReference type="NCBIfam" id="TIGR01971">
    <property type="entry name" value="NuoI"/>
    <property type="match status" value="1"/>
</dbReference>
<dbReference type="NCBIfam" id="NF004542">
    <property type="entry name" value="PRK05888.2-3"/>
    <property type="match status" value="1"/>
</dbReference>
<dbReference type="NCBIfam" id="NF004544">
    <property type="entry name" value="PRK05888.2-6"/>
    <property type="match status" value="1"/>
</dbReference>
<dbReference type="PANTHER" id="PTHR10849:SF20">
    <property type="entry name" value="NADH DEHYDROGENASE [UBIQUINONE] IRON-SULFUR PROTEIN 8, MITOCHONDRIAL"/>
    <property type="match status" value="1"/>
</dbReference>
<dbReference type="PANTHER" id="PTHR10849">
    <property type="entry name" value="NADH DEHYDROGENASE UBIQUINONE IRON-SULFUR PROTEIN 8, MITOCHONDRIAL"/>
    <property type="match status" value="1"/>
</dbReference>
<dbReference type="Pfam" id="PF12838">
    <property type="entry name" value="Fer4_7"/>
    <property type="match status" value="1"/>
</dbReference>
<dbReference type="SUPFAM" id="SSF54862">
    <property type="entry name" value="4Fe-4S ferredoxins"/>
    <property type="match status" value="1"/>
</dbReference>
<dbReference type="PROSITE" id="PS00198">
    <property type="entry name" value="4FE4S_FER_1"/>
    <property type="match status" value="1"/>
</dbReference>
<dbReference type="PROSITE" id="PS51379">
    <property type="entry name" value="4FE4S_FER_2"/>
    <property type="match status" value="2"/>
</dbReference>
<feature type="chain" id="PRO_1000143647" description="NADH-quinone oxidoreductase subunit I">
    <location>
        <begin position="1"/>
        <end position="220"/>
    </location>
</feature>
<feature type="domain" description="4Fe-4S ferredoxin-type 1" evidence="1">
    <location>
        <begin position="71"/>
        <end position="102"/>
    </location>
</feature>
<feature type="domain" description="4Fe-4S ferredoxin-type 2" evidence="1">
    <location>
        <begin position="112"/>
        <end position="141"/>
    </location>
</feature>
<feature type="region of interest" description="Disordered" evidence="2">
    <location>
        <begin position="187"/>
        <end position="220"/>
    </location>
</feature>
<feature type="compositionally biased region" description="Basic and acidic residues" evidence="2">
    <location>
        <begin position="198"/>
        <end position="220"/>
    </location>
</feature>
<feature type="binding site" evidence="1">
    <location>
        <position position="82"/>
    </location>
    <ligand>
        <name>[4Fe-4S] cluster</name>
        <dbReference type="ChEBI" id="CHEBI:49883"/>
        <label>1</label>
    </ligand>
</feature>
<feature type="binding site" evidence="1">
    <location>
        <position position="85"/>
    </location>
    <ligand>
        <name>[4Fe-4S] cluster</name>
        <dbReference type="ChEBI" id="CHEBI:49883"/>
        <label>1</label>
    </ligand>
</feature>
<feature type="binding site" evidence="1">
    <location>
        <position position="88"/>
    </location>
    <ligand>
        <name>[4Fe-4S] cluster</name>
        <dbReference type="ChEBI" id="CHEBI:49883"/>
        <label>1</label>
    </ligand>
</feature>
<feature type="binding site" evidence="1">
    <location>
        <position position="92"/>
    </location>
    <ligand>
        <name>[4Fe-4S] cluster</name>
        <dbReference type="ChEBI" id="CHEBI:49883"/>
        <label>2</label>
    </ligand>
</feature>
<feature type="binding site" evidence="1">
    <location>
        <position position="121"/>
    </location>
    <ligand>
        <name>[4Fe-4S] cluster</name>
        <dbReference type="ChEBI" id="CHEBI:49883"/>
        <label>2</label>
    </ligand>
</feature>
<feature type="binding site" evidence="1">
    <location>
        <position position="124"/>
    </location>
    <ligand>
        <name>[4Fe-4S] cluster</name>
        <dbReference type="ChEBI" id="CHEBI:49883"/>
        <label>2</label>
    </ligand>
</feature>
<feature type="binding site" evidence="1">
    <location>
        <position position="127"/>
    </location>
    <ligand>
        <name>[4Fe-4S] cluster</name>
        <dbReference type="ChEBI" id="CHEBI:49883"/>
        <label>2</label>
    </ligand>
</feature>
<feature type="binding site" evidence="1">
    <location>
        <position position="131"/>
    </location>
    <ligand>
        <name>[4Fe-4S] cluster</name>
        <dbReference type="ChEBI" id="CHEBI:49883"/>
        <label>1</label>
    </ligand>
</feature>
<gene>
    <name evidence="1" type="primary">nuoI</name>
    <name type="ordered locus">HPG27_1213</name>
</gene>
<reference key="1">
    <citation type="journal article" date="2009" name="J. Bacteriol.">
        <title>The complete genome sequence of Helicobacter pylori strain G27.</title>
        <authorList>
            <person name="Baltrus D.A."/>
            <person name="Amieva M.R."/>
            <person name="Covacci A."/>
            <person name="Lowe T.M."/>
            <person name="Merrell D.S."/>
            <person name="Ottemann K.M."/>
            <person name="Stein M."/>
            <person name="Salama N.R."/>
            <person name="Guillemin K."/>
        </authorList>
    </citation>
    <scope>NUCLEOTIDE SEQUENCE [LARGE SCALE GENOMIC DNA]</scope>
    <source>
        <strain>G27</strain>
    </source>
</reference>
<protein>
    <recommendedName>
        <fullName evidence="1">NADH-quinone oxidoreductase subunit I</fullName>
        <ecNumber evidence="1">7.1.1.-</ecNumber>
    </recommendedName>
    <alternativeName>
        <fullName evidence="1">NADH dehydrogenase I subunit I</fullName>
    </alternativeName>
    <alternativeName>
        <fullName evidence="1">NDH-1 subunit I</fullName>
    </alternativeName>
</protein>
<evidence type="ECO:0000255" key="1">
    <source>
        <dbReference type="HAMAP-Rule" id="MF_01351"/>
    </source>
</evidence>
<evidence type="ECO:0000256" key="2">
    <source>
        <dbReference type="SAM" id="MobiDB-lite"/>
    </source>
</evidence>
<name>NUOI_HELPG</name>
<accession>B5Z8R3</accession>